<sequence>MSQKLPPLKIYTSQLPLVSHKNMLENEEEASHSQLFTPCPVPPSFPKASKPNSNQPYPNGPVCIYPPNIYLYAKPTMPIIQSFDVVINVAKEVLHPFRTDGRHYRDSKHNLDIQVFDHIEYVHIHWDHDTQFALELDKLVSFVAYNAMQLNKKVLINCQMGISRSACLMIAFIMKTLNLNVSDAYEYVKERSPWIGPNMSLIFQLSEYQQIIRKNSSQGPYQSSSLKQSKRKSEGNLLFPEKPHSAQLPLVSPSTSESSMFTNLRRTRSSGSISNDAS</sequence>
<evidence type="ECO:0000255" key="1">
    <source>
        <dbReference type="PROSITE-ProRule" id="PRU00160"/>
    </source>
</evidence>
<evidence type="ECO:0000256" key="2">
    <source>
        <dbReference type="SAM" id="MobiDB-lite"/>
    </source>
</evidence>
<evidence type="ECO:0000269" key="3">
    <source>
    </source>
</evidence>
<evidence type="ECO:0000305" key="4"/>
<organism>
    <name type="scientific">Schizosaccharomyces pombe (strain 972 / ATCC 24843)</name>
    <name type="common">Fission yeast</name>
    <dbReference type="NCBI Taxonomy" id="284812"/>
    <lineage>
        <taxon>Eukaryota</taxon>
        <taxon>Fungi</taxon>
        <taxon>Dikarya</taxon>
        <taxon>Ascomycota</taxon>
        <taxon>Taphrinomycotina</taxon>
        <taxon>Schizosaccharomycetes</taxon>
        <taxon>Schizosaccharomycetales</taxon>
        <taxon>Schizosaccharomycetaceae</taxon>
        <taxon>Schizosaccharomyces</taxon>
    </lineage>
</organism>
<reference key="1">
    <citation type="journal article" date="1998" name="EMBO J.">
        <title>pmp1+, a suppressor of calcineurin deficiency, encodes a novel MAP kinase phosphatase in fission yeast.</title>
        <authorList>
            <person name="Sugiura R."/>
            <person name="Toda T."/>
            <person name="Shuntoh H."/>
            <person name="Yanagida M."/>
            <person name="Kuno T."/>
        </authorList>
    </citation>
    <scope>NUCLEOTIDE SEQUENCE [GENOMIC DNA]</scope>
    <scope>FUNCTION</scope>
</reference>
<reference key="2">
    <citation type="journal article" date="2002" name="Nature">
        <title>The genome sequence of Schizosaccharomyces pombe.</title>
        <authorList>
            <person name="Wood V."/>
            <person name="Gwilliam R."/>
            <person name="Rajandream M.A."/>
            <person name="Lyne M.H."/>
            <person name="Lyne R."/>
            <person name="Stewart A."/>
            <person name="Sgouros J.G."/>
            <person name="Peat N."/>
            <person name="Hayles J."/>
            <person name="Baker S.G."/>
            <person name="Basham D."/>
            <person name="Bowman S."/>
            <person name="Brooks K."/>
            <person name="Brown D."/>
            <person name="Brown S."/>
            <person name="Chillingworth T."/>
            <person name="Churcher C.M."/>
            <person name="Collins M."/>
            <person name="Connor R."/>
            <person name="Cronin A."/>
            <person name="Davis P."/>
            <person name="Feltwell T."/>
            <person name="Fraser A."/>
            <person name="Gentles S."/>
            <person name="Goble A."/>
            <person name="Hamlin N."/>
            <person name="Harris D.E."/>
            <person name="Hidalgo J."/>
            <person name="Hodgson G."/>
            <person name="Holroyd S."/>
            <person name="Hornsby T."/>
            <person name="Howarth S."/>
            <person name="Huckle E.J."/>
            <person name="Hunt S."/>
            <person name="Jagels K."/>
            <person name="James K.D."/>
            <person name="Jones L."/>
            <person name="Jones M."/>
            <person name="Leather S."/>
            <person name="McDonald S."/>
            <person name="McLean J."/>
            <person name="Mooney P."/>
            <person name="Moule S."/>
            <person name="Mungall K.L."/>
            <person name="Murphy L.D."/>
            <person name="Niblett D."/>
            <person name="Odell C."/>
            <person name="Oliver K."/>
            <person name="O'Neil S."/>
            <person name="Pearson D."/>
            <person name="Quail M.A."/>
            <person name="Rabbinowitsch E."/>
            <person name="Rutherford K.M."/>
            <person name="Rutter S."/>
            <person name="Saunders D."/>
            <person name="Seeger K."/>
            <person name="Sharp S."/>
            <person name="Skelton J."/>
            <person name="Simmonds M.N."/>
            <person name="Squares R."/>
            <person name="Squares S."/>
            <person name="Stevens K."/>
            <person name="Taylor K."/>
            <person name="Taylor R.G."/>
            <person name="Tivey A."/>
            <person name="Walsh S.V."/>
            <person name="Warren T."/>
            <person name="Whitehead S."/>
            <person name="Woodward J.R."/>
            <person name="Volckaert G."/>
            <person name="Aert R."/>
            <person name="Robben J."/>
            <person name="Grymonprez B."/>
            <person name="Weltjens I."/>
            <person name="Vanstreels E."/>
            <person name="Rieger M."/>
            <person name="Schaefer M."/>
            <person name="Mueller-Auer S."/>
            <person name="Gabel C."/>
            <person name="Fuchs M."/>
            <person name="Duesterhoeft A."/>
            <person name="Fritzc C."/>
            <person name="Holzer E."/>
            <person name="Moestl D."/>
            <person name="Hilbert H."/>
            <person name="Borzym K."/>
            <person name="Langer I."/>
            <person name="Beck A."/>
            <person name="Lehrach H."/>
            <person name="Reinhardt R."/>
            <person name="Pohl T.M."/>
            <person name="Eger P."/>
            <person name="Zimmermann W."/>
            <person name="Wedler H."/>
            <person name="Wambutt R."/>
            <person name="Purnelle B."/>
            <person name="Goffeau A."/>
            <person name="Cadieu E."/>
            <person name="Dreano S."/>
            <person name="Gloux S."/>
            <person name="Lelaure V."/>
            <person name="Mottier S."/>
            <person name="Galibert F."/>
            <person name="Aves S.J."/>
            <person name="Xiang Z."/>
            <person name="Hunt C."/>
            <person name="Moore K."/>
            <person name="Hurst S.M."/>
            <person name="Lucas M."/>
            <person name="Rochet M."/>
            <person name="Gaillardin C."/>
            <person name="Tallada V.A."/>
            <person name="Garzon A."/>
            <person name="Thode G."/>
            <person name="Daga R.R."/>
            <person name="Cruzado L."/>
            <person name="Jimenez J."/>
            <person name="Sanchez M."/>
            <person name="del Rey F."/>
            <person name="Benito J."/>
            <person name="Dominguez A."/>
            <person name="Revuelta J.L."/>
            <person name="Moreno S."/>
            <person name="Armstrong J."/>
            <person name="Forsburg S.L."/>
            <person name="Cerutti L."/>
            <person name="Lowe T."/>
            <person name="McCombie W.R."/>
            <person name="Paulsen I."/>
            <person name="Potashkin J."/>
            <person name="Shpakovski G.V."/>
            <person name="Ussery D."/>
            <person name="Barrell B.G."/>
            <person name="Nurse P."/>
        </authorList>
    </citation>
    <scope>NUCLEOTIDE SEQUENCE [LARGE SCALE GENOMIC DNA]</scope>
    <source>
        <strain>972 / ATCC 24843</strain>
    </source>
</reference>
<dbReference type="EC" id="3.1.3.48"/>
<dbReference type="EMBL" id="D82022">
    <property type="protein sequence ID" value="BAA22897.1"/>
    <property type="molecule type" value="Genomic_DNA"/>
</dbReference>
<dbReference type="EMBL" id="CU329671">
    <property type="protein sequence ID" value="CAA20049.1"/>
    <property type="molecule type" value="Genomic_DNA"/>
</dbReference>
<dbReference type="PIR" id="T39517">
    <property type="entry name" value="T39517"/>
</dbReference>
<dbReference type="RefSeq" id="NP_595205.1">
    <property type="nucleotide sequence ID" value="NM_001021111.2"/>
</dbReference>
<dbReference type="SMR" id="O13453"/>
<dbReference type="BioGRID" id="276563">
    <property type="interactions" value="95"/>
</dbReference>
<dbReference type="FunCoup" id="O13453">
    <property type="interactions" value="270"/>
</dbReference>
<dbReference type="IntAct" id="O13453">
    <property type="interactions" value="1"/>
</dbReference>
<dbReference type="STRING" id="284812.O13453"/>
<dbReference type="iPTMnet" id="O13453"/>
<dbReference type="PaxDb" id="4896-SPBC1685.01.1"/>
<dbReference type="EnsemblFungi" id="SPBC1685.01.1">
    <property type="protein sequence ID" value="SPBC1685.01.1:pep"/>
    <property type="gene ID" value="SPBC1685.01"/>
</dbReference>
<dbReference type="GeneID" id="2540019"/>
<dbReference type="KEGG" id="spo:2540019"/>
<dbReference type="PomBase" id="SPBC1685.01">
    <property type="gene designation" value="pmp1"/>
</dbReference>
<dbReference type="VEuPathDB" id="FungiDB:SPBC1685.01"/>
<dbReference type="eggNOG" id="KOG1716">
    <property type="taxonomic scope" value="Eukaryota"/>
</dbReference>
<dbReference type="HOGENOM" id="CLU_1001704_0_0_1"/>
<dbReference type="InParanoid" id="O13453"/>
<dbReference type="OMA" id="VCIYPPN"/>
<dbReference type="PhylomeDB" id="O13453"/>
<dbReference type="PRO" id="PR:O13453"/>
<dbReference type="Proteomes" id="UP000002485">
    <property type="component" value="Chromosome II"/>
</dbReference>
<dbReference type="GO" id="GO:0005737">
    <property type="term" value="C:cytoplasm"/>
    <property type="evidence" value="ECO:0000314"/>
    <property type="project" value="PomBase"/>
</dbReference>
<dbReference type="GO" id="GO:0005829">
    <property type="term" value="C:cytosol"/>
    <property type="evidence" value="ECO:0007005"/>
    <property type="project" value="PomBase"/>
</dbReference>
<dbReference type="GO" id="GO:0005634">
    <property type="term" value="C:nucleus"/>
    <property type="evidence" value="ECO:0007005"/>
    <property type="project" value="PomBase"/>
</dbReference>
<dbReference type="GO" id="GO:0033550">
    <property type="term" value="F:MAP kinase tyrosine phosphatase activity"/>
    <property type="evidence" value="ECO:0000314"/>
    <property type="project" value="PomBase"/>
</dbReference>
<dbReference type="GO" id="GO:0017017">
    <property type="term" value="F:MAP kinase tyrosine/serine/threonine phosphatase activity"/>
    <property type="evidence" value="ECO:0000318"/>
    <property type="project" value="GO_Central"/>
</dbReference>
<dbReference type="GO" id="GO:0008330">
    <property type="term" value="F:protein tyrosine/threonine phosphatase activity"/>
    <property type="evidence" value="ECO:0000318"/>
    <property type="project" value="GO_Central"/>
</dbReference>
<dbReference type="GO" id="GO:1903138">
    <property type="term" value="P:negative regulation of cell integrity MAPK cascade"/>
    <property type="evidence" value="ECO:0000269"/>
    <property type="project" value="PomBase"/>
</dbReference>
<dbReference type="GO" id="GO:0043409">
    <property type="term" value="P:negative regulation of MAPK cascade"/>
    <property type="evidence" value="ECO:0000318"/>
    <property type="project" value="GO_Central"/>
</dbReference>
<dbReference type="GO" id="GO:0007165">
    <property type="term" value="P:signal transduction"/>
    <property type="evidence" value="ECO:0000318"/>
    <property type="project" value="GO_Central"/>
</dbReference>
<dbReference type="CDD" id="cd14521">
    <property type="entry name" value="DSP_fungal_SDP1-like"/>
    <property type="match status" value="1"/>
</dbReference>
<dbReference type="Gene3D" id="3.90.190.10">
    <property type="entry name" value="Protein tyrosine phosphatase superfamily"/>
    <property type="match status" value="1"/>
</dbReference>
<dbReference type="InterPro" id="IPR000340">
    <property type="entry name" value="Dual-sp_phosphatase_cat-dom"/>
</dbReference>
<dbReference type="InterPro" id="IPR029021">
    <property type="entry name" value="Prot-tyrosine_phosphatase-like"/>
</dbReference>
<dbReference type="InterPro" id="IPR000387">
    <property type="entry name" value="Tyr_Pase_dom"/>
</dbReference>
<dbReference type="InterPro" id="IPR020422">
    <property type="entry name" value="TYR_PHOSPHATASE_DUAL_dom"/>
</dbReference>
<dbReference type="PANTHER" id="PTHR10159">
    <property type="entry name" value="DUAL SPECIFICITY PROTEIN PHOSPHATASE"/>
    <property type="match status" value="1"/>
</dbReference>
<dbReference type="PANTHER" id="PTHR10159:SF519">
    <property type="entry name" value="DUAL SPECIFICITY PROTEIN PHOSPHATASE MPK3"/>
    <property type="match status" value="1"/>
</dbReference>
<dbReference type="Pfam" id="PF00782">
    <property type="entry name" value="DSPc"/>
    <property type="match status" value="1"/>
</dbReference>
<dbReference type="SMART" id="SM00195">
    <property type="entry name" value="DSPc"/>
    <property type="match status" value="1"/>
</dbReference>
<dbReference type="SUPFAM" id="SSF52799">
    <property type="entry name" value="(Phosphotyrosine protein) phosphatases II"/>
    <property type="match status" value="1"/>
</dbReference>
<dbReference type="PROSITE" id="PS50056">
    <property type="entry name" value="TYR_PHOSPHATASE_2"/>
    <property type="match status" value="1"/>
</dbReference>
<dbReference type="PROSITE" id="PS50054">
    <property type="entry name" value="TYR_PHOSPHATASE_DUAL"/>
    <property type="match status" value="1"/>
</dbReference>
<gene>
    <name type="primary">pmp1</name>
    <name type="ORF">SPBC1685.01</name>
</gene>
<feature type="chain" id="PRO_0000094917" description="Tyrosine-protein phosphatase pmp1">
    <location>
        <begin position="1"/>
        <end position="278"/>
    </location>
</feature>
<feature type="domain" description="Tyrosine-protein phosphatase" evidence="1">
    <location>
        <begin position="60"/>
        <end position="214"/>
    </location>
</feature>
<feature type="region of interest" description="Disordered" evidence="2">
    <location>
        <begin position="217"/>
        <end position="278"/>
    </location>
</feature>
<feature type="compositionally biased region" description="Polar residues" evidence="2">
    <location>
        <begin position="252"/>
        <end position="278"/>
    </location>
</feature>
<feature type="active site" description="Phosphocysteine intermediate" evidence="1">
    <location>
        <position position="158"/>
    </location>
</feature>
<name>PMP1_SCHPO</name>
<accession>O13453</accession>
<proteinExistence type="inferred from homology"/>
<comment type="function">
    <text evidence="3">Dual specificity phosphatase that dephosphorylates MAP kinase pmk1 on a Tyr. Has a role in chloride ion homeostasis by inactivating this pmk1 MAP kinase pathway.</text>
</comment>
<comment type="catalytic activity">
    <reaction>
        <text>O-phospho-L-tyrosyl-[protein] + H2O = L-tyrosyl-[protein] + phosphate</text>
        <dbReference type="Rhea" id="RHEA:10684"/>
        <dbReference type="Rhea" id="RHEA-COMP:10136"/>
        <dbReference type="Rhea" id="RHEA-COMP:20101"/>
        <dbReference type="ChEBI" id="CHEBI:15377"/>
        <dbReference type="ChEBI" id="CHEBI:43474"/>
        <dbReference type="ChEBI" id="CHEBI:46858"/>
        <dbReference type="ChEBI" id="CHEBI:61978"/>
        <dbReference type="EC" id="3.1.3.48"/>
    </reaction>
</comment>
<comment type="similarity">
    <text evidence="4">Belongs to the protein-tyrosine phosphatase family. Non-receptor class dual specificity subfamily.</text>
</comment>
<protein>
    <recommendedName>
        <fullName>Tyrosine-protein phosphatase pmp1</fullName>
        <ecNumber>3.1.3.48</ecNumber>
    </recommendedName>
</protein>
<keyword id="KW-0131">Cell cycle</keyword>
<keyword id="KW-0378">Hydrolase</keyword>
<keyword id="KW-0904">Protein phosphatase</keyword>
<keyword id="KW-1185">Reference proteome</keyword>